<proteinExistence type="evidence at transcript level"/>
<name>PI15_XENLA</name>
<organism>
    <name type="scientific">Xenopus laevis</name>
    <name type="common">African clawed frog</name>
    <dbReference type="NCBI Taxonomy" id="8355"/>
    <lineage>
        <taxon>Eukaryota</taxon>
        <taxon>Metazoa</taxon>
        <taxon>Chordata</taxon>
        <taxon>Craniata</taxon>
        <taxon>Vertebrata</taxon>
        <taxon>Euteleostomi</taxon>
        <taxon>Amphibia</taxon>
        <taxon>Batrachia</taxon>
        <taxon>Anura</taxon>
        <taxon>Pipoidea</taxon>
        <taxon>Pipidae</taxon>
        <taxon>Xenopodinae</taxon>
        <taxon>Xenopus</taxon>
        <taxon>Xenopus</taxon>
    </lineage>
</organism>
<protein>
    <recommendedName>
        <fullName>Peptidase inhibitor 15</fullName>
    </recommendedName>
</protein>
<dbReference type="EMBL" id="BC106529">
    <property type="protein sequence ID" value="AAI06530.1"/>
    <property type="molecule type" value="mRNA"/>
</dbReference>
<dbReference type="RefSeq" id="NP_001089770.1">
    <property type="nucleotide sequence ID" value="NM_001096301.1"/>
</dbReference>
<dbReference type="SMR" id="Q3KPV7"/>
<dbReference type="GlyCosmos" id="Q3KPV7">
    <property type="glycosylation" value="2 sites, No reported glycans"/>
</dbReference>
<dbReference type="DNASU" id="734834"/>
<dbReference type="GeneID" id="734834"/>
<dbReference type="KEGG" id="xla:734834"/>
<dbReference type="AGR" id="Xenbase:XB-GENE-989407"/>
<dbReference type="CTD" id="734834"/>
<dbReference type="Xenbase" id="XB-GENE-989407">
    <property type="gene designation" value="pi15.S"/>
</dbReference>
<dbReference type="OMA" id="IWEHGPR"/>
<dbReference type="OrthoDB" id="414826at2759"/>
<dbReference type="Proteomes" id="UP000186698">
    <property type="component" value="Chromosome 6S"/>
</dbReference>
<dbReference type="Bgee" id="734834">
    <property type="expression patterns" value="Expressed in internal ear and 8 other cell types or tissues"/>
</dbReference>
<dbReference type="GO" id="GO:0005615">
    <property type="term" value="C:extracellular space"/>
    <property type="evidence" value="ECO:0000318"/>
    <property type="project" value="GO_Central"/>
</dbReference>
<dbReference type="GO" id="GO:0030414">
    <property type="term" value="F:peptidase inhibitor activity"/>
    <property type="evidence" value="ECO:0007669"/>
    <property type="project" value="UniProtKB-KW"/>
</dbReference>
<dbReference type="CDD" id="cd18814">
    <property type="entry name" value="CAP_PI15"/>
    <property type="match status" value="1"/>
</dbReference>
<dbReference type="FunFam" id="3.40.33.10:FF:000003">
    <property type="entry name" value="Peptidase inhibitor 15"/>
    <property type="match status" value="1"/>
</dbReference>
<dbReference type="Gene3D" id="3.40.33.10">
    <property type="entry name" value="CAP"/>
    <property type="match status" value="1"/>
</dbReference>
<dbReference type="InterPro" id="IPR018244">
    <property type="entry name" value="Allrgn_V5/Tpx1_CS"/>
</dbReference>
<dbReference type="InterPro" id="IPR014044">
    <property type="entry name" value="CAP_dom"/>
</dbReference>
<dbReference type="InterPro" id="IPR035940">
    <property type="entry name" value="CAP_sf"/>
</dbReference>
<dbReference type="InterPro" id="IPR001283">
    <property type="entry name" value="CRISP-related"/>
</dbReference>
<dbReference type="InterPro" id="IPR047832">
    <property type="entry name" value="PI15_CAP"/>
</dbReference>
<dbReference type="PANTHER" id="PTHR10334">
    <property type="entry name" value="CYSTEINE-RICH SECRETORY PROTEIN-RELATED"/>
    <property type="match status" value="1"/>
</dbReference>
<dbReference type="Pfam" id="PF00188">
    <property type="entry name" value="CAP"/>
    <property type="match status" value="1"/>
</dbReference>
<dbReference type="PRINTS" id="PR00837">
    <property type="entry name" value="V5TPXLIKE"/>
</dbReference>
<dbReference type="SMART" id="SM00198">
    <property type="entry name" value="SCP"/>
    <property type="match status" value="1"/>
</dbReference>
<dbReference type="SUPFAM" id="SSF55797">
    <property type="entry name" value="PR-1-like"/>
    <property type="match status" value="1"/>
</dbReference>
<dbReference type="PROSITE" id="PS01010">
    <property type="entry name" value="CRISP_2"/>
    <property type="match status" value="1"/>
</dbReference>
<comment type="function">
    <text evidence="1 2">Serine protease inhibitor which displays weak inhibitory activity against trypsin (By similarity). May be involved in facial patterning during embryonic development (By similarity).</text>
</comment>
<comment type="subcellular location">
    <subcellularLocation>
        <location evidence="1">Secreted</location>
    </subcellularLocation>
</comment>
<comment type="similarity">
    <text evidence="4">Belongs to the CRISP family.</text>
</comment>
<gene>
    <name type="primary">pi15</name>
</gene>
<keyword id="KW-0217">Developmental protein</keyword>
<keyword id="KW-0325">Glycoprotein</keyword>
<keyword id="KW-0646">Protease inhibitor</keyword>
<keyword id="KW-1185">Reference proteome</keyword>
<keyword id="KW-0964">Secreted</keyword>
<keyword id="KW-0732">Signal</keyword>
<feature type="signal peptide" evidence="3">
    <location>
        <begin position="1"/>
        <end position="21"/>
    </location>
</feature>
<feature type="propeptide" id="PRO_0000287630" evidence="1">
    <location>
        <begin position="22"/>
        <end position="60"/>
    </location>
</feature>
<feature type="chain" id="PRO_0000287631" description="Peptidase inhibitor 15">
    <location>
        <begin position="61"/>
        <end position="258"/>
    </location>
</feature>
<feature type="domain" description="SCP">
    <location>
        <begin position="71"/>
        <end position="211"/>
    </location>
</feature>
<feature type="glycosylation site" description="N-linked (GlcNAc...) asparagine" evidence="3">
    <location>
        <position position="36"/>
    </location>
</feature>
<feature type="glycosylation site" description="N-linked (GlcNAc...) asparagine" evidence="3">
    <location>
        <position position="124"/>
    </location>
</feature>
<evidence type="ECO:0000250" key="1">
    <source>
        <dbReference type="UniProtKB" id="O43692"/>
    </source>
</evidence>
<evidence type="ECO:0000250" key="2">
    <source>
        <dbReference type="UniProtKB" id="Q98ST6"/>
    </source>
</evidence>
<evidence type="ECO:0000255" key="3"/>
<evidence type="ECO:0000305" key="4"/>
<reference key="1">
    <citation type="submission" date="2005-10" db="EMBL/GenBank/DDBJ databases">
        <authorList>
            <consortium name="NIH - Xenopus Gene Collection (XGC) project"/>
        </authorList>
    </citation>
    <scope>NUCLEOTIDE SEQUENCE [LARGE SCALE MRNA]</scope>
    <source>
        <tissue>Testis</tissue>
    </source>
</reference>
<accession>Q3KPV7</accession>
<sequence length="258" mass="29195">MIEMISISAAFLLSLLCETCGLVLPKSSDLAIAASNYTIIKPDLSARLDPVKAPKARRKRYISQNDMIEIVEYHNQVRGKVFPPAANMEYMVWDDNLAKLAEAWAATCIWDHGPSYLLKFLGQNLSVRTGRYKSILQLVKPWYDEVKDYAFPYPQECNPRCPLRCYGPMCTHYTQMVWATTNRIGCAIHTCHNINVWGAVWRRAVYLVCNYSPKGNWIGEAPYTIGVPCSACPPSYGGSCSDNQCFPGITSNYLHWFK</sequence>